<sequence>MGAPALLWPSLLLPWLTVLFGQPPGTLAQTQVCSVNQTIFRVEENTTVSEPLVNIFVPDGLHVTLGPLSTPYAFRIEGKDLFLNVTPDYEENSLLQADVECKRGDAVVVRLEVFVAVLDINDNAPKFSFEIKTFNVSEDTKVNTTVIPETQLKATDADINDILVYTLQEVTPNASKFFSLEGVNYPALKLDQTLDYFKNQNMTFMLLARDTWEENVEPSHTATATLVLNTLPADLRTPWFLPCSFTDGYVCIHAQYSAVVPTGHKLPSPLIMSPGPIYAVDGDQAINQSIIYSIIAGNTDGTFIINAHDGNLTMTKSIPSPMKFTLLIRADQEDMAQYSVTQAIVEARSVTGNPLQFSQSLYYGTVVLGSEAGTAVKDKTFPSEILRIQAQYPGFPDLNSAVTYRVTNSSEFMMNKDIMLTAVPMEEARTIRVEVEASNTVTKDTATAVVEIQVSERERTPTPPEAGGTTGPSSNTTMEAPLTSGTSQRPATTSSGGSVGPFPPGGTTLRPPTPASSIPGGSPTLGTSTSPQTTTPGGDSAQTPKPGTSHPTAPTSRTSTSLMTTSSRSDSTQTPKPGTSQPMVPIPGASTSSQPATPSGSSPQTPKPGTSQSTATGPISLPSTGAGEQGDGQRFSTVDMAVLGGVLGALLLLALICLVILVHKHYRHRLACCSGKASEPQPSGYDNLTFLPDHKAKWSPTPNRKPEPSPKLAQPPLRPPSPMSSSPTPPSSTPPSPQPKASGSPKTVQAGDSPSAVRSILTKERRPEGEGGYKAVWFGKDIGAEADVVVLNEPTADVDSASASGSEGSDDDDPDQKKTLRFGVDADNTYI</sequence>
<comment type="function">
    <text evidence="1">Intermicrovillar adhesion molecule that forms, via its extracellular domain, calcium-dependent heterophilic complexes with CDHR2 on adjacent microvilli. Thereby, controls the packing of microvilli at the apical membrane of epithelial cells. Through its cytoplasmic domain, interacts with microvillus cytoplasmic proteins to form the intermicrovillar adhesion complex/IMAC. This complex plays a central role in microvilli and epithelial brush border differentiation.</text>
</comment>
<comment type="subunit">
    <text evidence="1">Part of the IMAC/intermicrovillar adhesion complex/intermicrovillar tip-link complex composed of ANKS4B, MYO7B, USH1C, CDHR2 and CDHR5. Interacts (via cytoplasmic domain) with USH1C and MYO7B; required for proper localization of CDHR5 to microvilli tips and its function in brush border differentiation.</text>
</comment>
<comment type="subcellular location">
    <subcellularLocation>
        <location evidence="1">Apical cell membrane</location>
        <topology evidence="1">Single-pass type I membrane protein</topology>
    </subcellularLocation>
    <subcellularLocation>
        <location evidence="1">Cell projection</location>
        <location evidence="1">Microvillus membrane</location>
        <topology evidence="1">Single-pass type I membrane protein</topology>
    </subcellularLocation>
</comment>
<comment type="alternative products">
    <event type="alternative splicing"/>
    <isoform>
        <id>Q8VHF2-1</id>
        <name evidence="9">1</name>
        <sequence type="displayed"/>
    </isoform>
    <isoform>
        <id>Q8VHF2-2</id>
        <name evidence="9">2</name>
        <sequence type="described" ref="VSP_050689"/>
    </isoform>
</comment>
<comment type="developmental stage">
    <text evidence="6">Detected at embryonic day 7. Expression decreases by day 11 and increases again between embryonic days 15 and 17.</text>
</comment>
<comment type="PTM">
    <text evidence="2">N- and O-glycosylated.</text>
</comment>
<evidence type="ECO:0000250" key="1">
    <source>
        <dbReference type="UniProtKB" id="Q9HBB8"/>
    </source>
</evidence>
<evidence type="ECO:0000250" key="2">
    <source>
        <dbReference type="UniProtKB" id="Q9JIK1"/>
    </source>
</evidence>
<evidence type="ECO:0000255" key="3"/>
<evidence type="ECO:0000255" key="4">
    <source>
        <dbReference type="PROSITE-ProRule" id="PRU00043"/>
    </source>
</evidence>
<evidence type="ECO:0000256" key="5">
    <source>
        <dbReference type="SAM" id="MobiDB-lite"/>
    </source>
</evidence>
<evidence type="ECO:0000269" key="6">
    <source>
    </source>
</evidence>
<evidence type="ECO:0000303" key="7">
    <source>
    </source>
</evidence>
<evidence type="ECO:0000303" key="8">
    <source>
    </source>
</evidence>
<evidence type="ECO:0000305" key="9"/>
<evidence type="ECO:0000312" key="10">
    <source>
        <dbReference type="EMBL" id="AAH54469.1"/>
    </source>
</evidence>
<evidence type="ECO:0000312" key="11">
    <source>
        <dbReference type="EMBL" id="AAL67856.1"/>
    </source>
</evidence>
<evidence type="ECO:0000312" key="12">
    <source>
        <dbReference type="MGI" id="MGI:1919290"/>
    </source>
</evidence>
<evidence type="ECO:0007744" key="13">
    <source>
    </source>
</evidence>
<evidence type="ECO:0007744" key="14">
    <source>
    </source>
</evidence>
<accession>Q8VHF2</accession>
<accession>Q8CEJ3</accession>
<accession>Q9D8I9</accession>
<keyword id="KW-0025">Alternative splicing</keyword>
<keyword id="KW-0106">Calcium</keyword>
<keyword id="KW-1003">Cell membrane</keyword>
<keyword id="KW-0966">Cell projection</keyword>
<keyword id="KW-0221">Differentiation</keyword>
<keyword id="KW-0325">Glycoprotein</keyword>
<keyword id="KW-0472">Membrane</keyword>
<keyword id="KW-0597">Phosphoprotein</keyword>
<keyword id="KW-1185">Reference proteome</keyword>
<keyword id="KW-0677">Repeat</keyword>
<keyword id="KW-0732">Signal</keyword>
<keyword id="KW-0812">Transmembrane</keyword>
<keyword id="KW-1133">Transmembrane helix</keyword>
<gene>
    <name evidence="12" type="primary">Cdhr5</name>
    <name evidence="12" type="synonym">Mucdhl</name>
    <name evidence="12" type="synonym">Mupcdh</name>
</gene>
<protein>
    <recommendedName>
        <fullName evidence="9">Cadherin-related family member 5</fullName>
    </recommendedName>
    <alternativeName>
        <fullName evidence="11">Mu-protocadherin</fullName>
    </alternativeName>
</protein>
<feature type="signal peptide" evidence="3">
    <location>
        <begin position="1"/>
        <end position="28"/>
    </location>
</feature>
<feature type="chain" id="PRO_0000004013" description="Cadherin-related family member 5">
    <location>
        <begin position="29"/>
        <end position="831"/>
    </location>
</feature>
<feature type="topological domain" description="Extracellular" evidence="3">
    <location>
        <begin position="29"/>
        <end position="641"/>
    </location>
</feature>
<feature type="transmembrane region" description="Helical" evidence="3">
    <location>
        <begin position="642"/>
        <end position="662"/>
    </location>
</feature>
<feature type="topological domain" description="Cytoplasmic" evidence="3">
    <location>
        <begin position="663"/>
        <end position="831"/>
    </location>
</feature>
<feature type="domain" description="Cadherin 1" evidence="4 9">
    <location>
        <begin position="53"/>
        <end position="125"/>
    </location>
</feature>
<feature type="domain" description="Cadherin 2" evidence="4 9">
    <location>
        <begin position="128"/>
        <end position="240"/>
    </location>
</feature>
<feature type="domain" description="Cadherin 3" evidence="4 9">
    <location>
        <begin position="252"/>
        <end position="357"/>
    </location>
</feature>
<feature type="domain" description="Cadherin 4" evidence="4 9">
    <location>
        <begin position="358"/>
        <end position="459"/>
    </location>
</feature>
<feature type="repeat" description="1" evidence="9">
    <location>
        <begin position="541"/>
        <end position="571"/>
    </location>
</feature>
<feature type="repeat" description="2" evidence="9">
    <location>
        <begin position="572"/>
        <end position="602"/>
    </location>
</feature>
<feature type="repeat" description="3; truncated">
    <location>
        <begin position="605"/>
        <end position="614"/>
    </location>
</feature>
<feature type="region of interest" description="Disordered" evidence="5">
    <location>
        <begin position="452"/>
        <end position="632"/>
    </location>
</feature>
<feature type="region of interest" description="3 X 31 AA approximate tandem repeats">
    <location>
        <begin position="541"/>
        <end position="614"/>
    </location>
</feature>
<feature type="region of interest" description="Mediates interaction with USH1C and MYO7B and is required for proper localization to microvilli tips and function in microvilli organization" evidence="1">
    <location>
        <begin position="663"/>
        <end position="831"/>
    </location>
</feature>
<feature type="region of interest" description="Disordered" evidence="5">
    <location>
        <begin position="675"/>
        <end position="774"/>
    </location>
</feature>
<feature type="region of interest" description="Disordered" evidence="5">
    <location>
        <begin position="793"/>
        <end position="831"/>
    </location>
</feature>
<feature type="compositionally biased region" description="Polar residues" evidence="5">
    <location>
        <begin position="473"/>
        <end position="491"/>
    </location>
</feature>
<feature type="compositionally biased region" description="Low complexity" evidence="5">
    <location>
        <begin position="505"/>
        <end position="540"/>
    </location>
</feature>
<feature type="compositionally biased region" description="Polar residues" evidence="5">
    <location>
        <begin position="541"/>
        <end position="554"/>
    </location>
</feature>
<feature type="compositionally biased region" description="Low complexity" evidence="5">
    <location>
        <begin position="555"/>
        <end position="572"/>
    </location>
</feature>
<feature type="compositionally biased region" description="Polar residues" evidence="5">
    <location>
        <begin position="573"/>
        <end position="582"/>
    </location>
</feature>
<feature type="compositionally biased region" description="Polar residues" evidence="5">
    <location>
        <begin position="589"/>
        <end position="623"/>
    </location>
</feature>
<feature type="compositionally biased region" description="Pro residues" evidence="5">
    <location>
        <begin position="716"/>
        <end position="738"/>
    </location>
</feature>
<feature type="compositionally biased region" description="Basic and acidic residues" evidence="5">
    <location>
        <begin position="761"/>
        <end position="771"/>
    </location>
</feature>
<feature type="compositionally biased region" description="Low complexity" evidence="5">
    <location>
        <begin position="797"/>
        <end position="807"/>
    </location>
</feature>
<feature type="modified residue" description="Phosphoserine" evidence="2">
    <location>
        <position position="699"/>
    </location>
</feature>
<feature type="modified residue" description="Phosphoserine" evidence="14">
    <location>
        <position position="721"/>
    </location>
</feature>
<feature type="modified residue" description="Phosphoserine" evidence="14">
    <location>
        <position position="725"/>
    </location>
</feature>
<feature type="modified residue" description="Phosphothreonine" evidence="14">
    <location>
        <position position="728"/>
    </location>
</feature>
<feature type="modified residue" description="Phosphoserine" evidence="14">
    <location>
        <position position="736"/>
    </location>
</feature>
<feature type="modified residue" description="Phosphoserine" evidence="13 14">
    <location>
        <position position="753"/>
    </location>
</feature>
<feature type="modified residue" description="Phosphothreonine" evidence="1">
    <location>
        <position position="795"/>
    </location>
</feature>
<feature type="modified residue" description="Phosphoserine" evidence="1">
    <location>
        <position position="802"/>
    </location>
</feature>
<feature type="modified residue" description="Phosphoserine" evidence="1">
    <location>
        <position position="804"/>
    </location>
</feature>
<feature type="modified residue" description="Phosphoserine" evidence="1">
    <location>
        <position position="806"/>
    </location>
</feature>
<feature type="glycosylation site" description="N-linked (GlcNAc...) asparagine" evidence="9">
    <location>
        <position position="36"/>
    </location>
</feature>
<feature type="glycosylation site" description="N-linked (GlcNAc...) asparagine" evidence="9">
    <location>
        <position position="45"/>
    </location>
</feature>
<feature type="glycosylation site" description="N-linked (GlcNAc...) asparagine" evidence="3">
    <location>
        <position position="84"/>
    </location>
</feature>
<feature type="glycosylation site" description="N-linked (GlcNAc...) asparagine" evidence="9">
    <location>
        <position position="135"/>
    </location>
</feature>
<feature type="glycosylation site" description="N-linked (GlcNAc...) asparagine" evidence="9">
    <location>
        <position position="143"/>
    </location>
</feature>
<feature type="glycosylation site" description="N-linked (GlcNAc...) asparagine" evidence="9">
    <location>
        <position position="173"/>
    </location>
</feature>
<feature type="glycosylation site" description="N-linked (GlcNAc...) asparagine" evidence="9">
    <location>
        <position position="201"/>
    </location>
</feature>
<feature type="glycosylation site" description="N-linked (GlcNAc...) asparagine" evidence="9">
    <location>
        <position position="287"/>
    </location>
</feature>
<feature type="glycosylation site" description="N-linked (GlcNAc...) asparagine" evidence="9">
    <location>
        <position position="311"/>
    </location>
</feature>
<feature type="glycosylation site" description="N-linked (GlcNAc...) asparagine" evidence="9">
    <location>
        <position position="408"/>
    </location>
</feature>
<feature type="glycosylation site" description="N-linked (GlcNAc...) asparagine" evidence="9">
    <location>
        <position position="475"/>
    </location>
</feature>
<feature type="splice variant" id="VSP_050689" description="In isoform 2." evidence="7 8">
    <location>
        <begin position="459"/>
        <end position="620"/>
    </location>
</feature>
<feature type="sequence conflict" description="In Ref. 2; BAC25662." evidence="9" ref="2">
    <original>RT</original>
    <variation>LPSTEF</variation>
    <location>
        <begin position="459"/>
        <end position="460"/>
    </location>
</feature>
<feature type="sequence conflict" description="In Ref. 2; BAC25662." evidence="9" ref="2">
    <location>
        <begin position="621"/>
        <end position="624"/>
    </location>
</feature>
<proteinExistence type="evidence at protein level"/>
<reference evidence="9" key="1">
    <citation type="submission" date="2001-12" db="EMBL/GenBank/DDBJ databases">
        <title>Cloning and characterization of mouse mu-protocadherin.</title>
        <authorList>
            <person name="Soleiman A."/>
            <person name="Krieger S."/>
        </authorList>
    </citation>
    <scope>NUCLEOTIDE SEQUENCE [MRNA] (ISOFORM 1)</scope>
    <source>
        <strain evidence="11">BALB/cJ</strain>
        <tissue evidence="11">Colon</tissue>
    </source>
</reference>
<reference key="2">
    <citation type="journal article" date="2005" name="Science">
        <title>The transcriptional landscape of the mammalian genome.</title>
        <authorList>
            <person name="Carninci P."/>
            <person name="Kasukawa T."/>
            <person name="Katayama S."/>
            <person name="Gough J."/>
            <person name="Frith M.C."/>
            <person name="Maeda N."/>
            <person name="Oyama R."/>
            <person name="Ravasi T."/>
            <person name="Lenhard B."/>
            <person name="Wells C."/>
            <person name="Kodzius R."/>
            <person name="Shimokawa K."/>
            <person name="Bajic V.B."/>
            <person name="Brenner S.E."/>
            <person name="Batalov S."/>
            <person name="Forrest A.R."/>
            <person name="Zavolan M."/>
            <person name="Davis M.J."/>
            <person name="Wilming L.G."/>
            <person name="Aidinis V."/>
            <person name="Allen J.E."/>
            <person name="Ambesi-Impiombato A."/>
            <person name="Apweiler R."/>
            <person name="Aturaliya R.N."/>
            <person name="Bailey T.L."/>
            <person name="Bansal M."/>
            <person name="Baxter L."/>
            <person name="Beisel K.W."/>
            <person name="Bersano T."/>
            <person name="Bono H."/>
            <person name="Chalk A.M."/>
            <person name="Chiu K.P."/>
            <person name="Choudhary V."/>
            <person name="Christoffels A."/>
            <person name="Clutterbuck D.R."/>
            <person name="Crowe M.L."/>
            <person name="Dalla E."/>
            <person name="Dalrymple B.P."/>
            <person name="de Bono B."/>
            <person name="Della Gatta G."/>
            <person name="di Bernardo D."/>
            <person name="Down T."/>
            <person name="Engstrom P."/>
            <person name="Fagiolini M."/>
            <person name="Faulkner G."/>
            <person name="Fletcher C.F."/>
            <person name="Fukushima T."/>
            <person name="Furuno M."/>
            <person name="Futaki S."/>
            <person name="Gariboldi M."/>
            <person name="Georgii-Hemming P."/>
            <person name="Gingeras T.R."/>
            <person name="Gojobori T."/>
            <person name="Green R.E."/>
            <person name="Gustincich S."/>
            <person name="Harbers M."/>
            <person name="Hayashi Y."/>
            <person name="Hensch T.K."/>
            <person name="Hirokawa N."/>
            <person name="Hill D."/>
            <person name="Huminiecki L."/>
            <person name="Iacono M."/>
            <person name="Ikeo K."/>
            <person name="Iwama A."/>
            <person name="Ishikawa T."/>
            <person name="Jakt M."/>
            <person name="Kanapin A."/>
            <person name="Katoh M."/>
            <person name="Kawasawa Y."/>
            <person name="Kelso J."/>
            <person name="Kitamura H."/>
            <person name="Kitano H."/>
            <person name="Kollias G."/>
            <person name="Krishnan S.P."/>
            <person name="Kruger A."/>
            <person name="Kummerfeld S.K."/>
            <person name="Kurochkin I.V."/>
            <person name="Lareau L.F."/>
            <person name="Lazarevic D."/>
            <person name="Lipovich L."/>
            <person name="Liu J."/>
            <person name="Liuni S."/>
            <person name="McWilliam S."/>
            <person name="Madan Babu M."/>
            <person name="Madera M."/>
            <person name="Marchionni L."/>
            <person name="Matsuda H."/>
            <person name="Matsuzawa S."/>
            <person name="Miki H."/>
            <person name="Mignone F."/>
            <person name="Miyake S."/>
            <person name="Morris K."/>
            <person name="Mottagui-Tabar S."/>
            <person name="Mulder N."/>
            <person name="Nakano N."/>
            <person name="Nakauchi H."/>
            <person name="Ng P."/>
            <person name="Nilsson R."/>
            <person name="Nishiguchi S."/>
            <person name="Nishikawa S."/>
            <person name="Nori F."/>
            <person name="Ohara O."/>
            <person name="Okazaki Y."/>
            <person name="Orlando V."/>
            <person name="Pang K.C."/>
            <person name="Pavan W.J."/>
            <person name="Pavesi G."/>
            <person name="Pesole G."/>
            <person name="Petrovsky N."/>
            <person name="Piazza S."/>
            <person name="Reed J."/>
            <person name="Reid J.F."/>
            <person name="Ring B.Z."/>
            <person name="Ringwald M."/>
            <person name="Rost B."/>
            <person name="Ruan Y."/>
            <person name="Salzberg S.L."/>
            <person name="Sandelin A."/>
            <person name="Schneider C."/>
            <person name="Schoenbach C."/>
            <person name="Sekiguchi K."/>
            <person name="Semple C.A."/>
            <person name="Seno S."/>
            <person name="Sessa L."/>
            <person name="Sheng Y."/>
            <person name="Shibata Y."/>
            <person name="Shimada H."/>
            <person name="Shimada K."/>
            <person name="Silva D."/>
            <person name="Sinclair B."/>
            <person name="Sperling S."/>
            <person name="Stupka E."/>
            <person name="Sugiura K."/>
            <person name="Sultana R."/>
            <person name="Takenaka Y."/>
            <person name="Taki K."/>
            <person name="Tammoja K."/>
            <person name="Tan S.L."/>
            <person name="Tang S."/>
            <person name="Taylor M.S."/>
            <person name="Tegner J."/>
            <person name="Teichmann S.A."/>
            <person name="Ueda H.R."/>
            <person name="van Nimwegen E."/>
            <person name="Verardo R."/>
            <person name="Wei C.L."/>
            <person name="Yagi K."/>
            <person name="Yamanishi H."/>
            <person name="Zabarovsky E."/>
            <person name="Zhu S."/>
            <person name="Zimmer A."/>
            <person name="Hide W."/>
            <person name="Bult C."/>
            <person name="Grimmond S.M."/>
            <person name="Teasdale R.D."/>
            <person name="Liu E.T."/>
            <person name="Brusic V."/>
            <person name="Quackenbush J."/>
            <person name="Wahlestedt C."/>
            <person name="Mattick J.S."/>
            <person name="Hume D.A."/>
            <person name="Kai C."/>
            <person name="Sasaki D."/>
            <person name="Tomaru Y."/>
            <person name="Fukuda S."/>
            <person name="Kanamori-Katayama M."/>
            <person name="Suzuki M."/>
            <person name="Aoki J."/>
            <person name="Arakawa T."/>
            <person name="Iida J."/>
            <person name="Imamura K."/>
            <person name="Itoh M."/>
            <person name="Kato T."/>
            <person name="Kawaji H."/>
            <person name="Kawagashira N."/>
            <person name="Kawashima T."/>
            <person name="Kojima M."/>
            <person name="Kondo S."/>
            <person name="Konno H."/>
            <person name="Nakano K."/>
            <person name="Ninomiya N."/>
            <person name="Nishio T."/>
            <person name="Okada M."/>
            <person name="Plessy C."/>
            <person name="Shibata K."/>
            <person name="Shiraki T."/>
            <person name="Suzuki S."/>
            <person name="Tagami M."/>
            <person name="Waki K."/>
            <person name="Watahiki A."/>
            <person name="Okamura-Oho Y."/>
            <person name="Suzuki H."/>
            <person name="Kawai J."/>
            <person name="Hayashizaki Y."/>
        </authorList>
    </citation>
    <scope>NUCLEOTIDE SEQUENCE [LARGE SCALE MRNA] (ISOFORMS 1 AND 2)</scope>
    <source>
        <strain>C57BL/6J</strain>
        <tissue>Kidney</tissue>
        <tissue>Pancreas</tissue>
    </source>
</reference>
<reference evidence="9" key="3">
    <citation type="journal article" date="2004" name="Genome Res.">
        <title>The status, quality, and expansion of the NIH full-length cDNA project: the Mammalian Gene Collection (MGC).</title>
        <authorList>
            <consortium name="The MGC Project Team"/>
        </authorList>
    </citation>
    <scope>NUCLEOTIDE SEQUENCE [LARGE SCALE MRNA] (ISOFORM 2)</scope>
    <source>
        <strain evidence="10">FVB/N</strain>
        <tissue evidence="10">Colon</tissue>
    </source>
</reference>
<reference evidence="9" key="4">
    <citation type="journal article" date="2000" name="J. Biol. Chem.">
        <title>mu-protocadherin, a novel developmentally regulated protocadherin with mucin-like domains.</title>
        <authorList>
            <person name="Goldberg M."/>
            <person name="Peshkovsky C."/>
            <person name="Shifteh A."/>
            <person name="Al-Awqati Q."/>
        </authorList>
    </citation>
    <scope>DEVELOPMENTAL STAGE</scope>
</reference>
<reference key="5">
    <citation type="journal article" date="2007" name="Proc. Natl. Acad. Sci. U.S.A.">
        <title>Large-scale phosphorylation analysis of mouse liver.</title>
        <authorList>
            <person name="Villen J."/>
            <person name="Beausoleil S.A."/>
            <person name="Gerber S.A."/>
            <person name="Gygi S.P."/>
        </authorList>
    </citation>
    <scope>PHOSPHORYLATION [LARGE SCALE ANALYSIS] AT SER-753</scope>
    <scope>IDENTIFICATION BY MASS SPECTROMETRY [LARGE SCALE ANALYSIS]</scope>
    <source>
        <tissue>Liver</tissue>
    </source>
</reference>
<reference key="6">
    <citation type="journal article" date="2010" name="Cell">
        <title>A tissue-specific atlas of mouse protein phosphorylation and expression.</title>
        <authorList>
            <person name="Huttlin E.L."/>
            <person name="Jedrychowski M.P."/>
            <person name="Elias J.E."/>
            <person name="Goswami T."/>
            <person name="Rad R."/>
            <person name="Beausoleil S.A."/>
            <person name="Villen J."/>
            <person name="Haas W."/>
            <person name="Sowa M.E."/>
            <person name="Gygi S.P."/>
        </authorList>
    </citation>
    <scope>PHOSPHORYLATION [LARGE SCALE ANALYSIS] AT SER-721; SER-725; THR-728; SER-736 AND SER-753</scope>
    <scope>IDENTIFICATION BY MASS SPECTROMETRY [LARGE SCALE ANALYSIS]</scope>
    <source>
        <tissue>Kidney</tissue>
        <tissue>Liver</tissue>
    </source>
</reference>
<name>CDHR5_MOUSE</name>
<dbReference type="EMBL" id="AF462391">
    <property type="protein sequence ID" value="AAL67856.1"/>
    <property type="molecule type" value="mRNA"/>
</dbReference>
<dbReference type="EMBL" id="AK007988">
    <property type="protein sequence ID" value="BAB25392.1"/>
    <property type="molecule type" value="mRNA"/>
</dbReference>
<dbReference type="EMBL" id="AK027913">
    <property type="protein sequence ID" value="BAC25662.1"/>
    <property type="molecule type" value="mRNA"/>
</dbReference>
<dbReference type="EMBL" id="BC054469">
    <property type="protein sequence ID" value="AAH54469.1"/>
    <property type="molecule type" value="mRNA"/>
</dbReference>
<dbReference type="CCDS" id="CCDS22006.1">
    <molecule id="Q8VHF2-2"/>
</dbReference>
<dbReference type="RefSeq" id="NP_001107794.1">
    <property type="nucleotide sequence ID" value="NM_001114322.1"/>
</dbReference>
<dbReference type="RefSeq" id="NP_082345.1">
    <molecule id="Q8VHF2-2"/>
    <property type="nucleotide sequence ID" value="NM_028069.3"/>
</dbReference>
<dbReference type="SMR" id="Q8VHF2"/>
<dbReference type="FunCoup" id="Q8VHF2">
    <property type="interactions" value="61"/>
</dbReference>
<dbReference type="STRING" id="10090.ENSMUSP00000127292"/>
<dbReference type="GlyCosmos" id="Q8VHF2">
    <property type="glycosylation" value="11 sites, No reported glycans"/>
</dbReference>
<dbReference type="GlyGen" id="Q8VHF2">
    <property type="glycosylation" value="15 sites"/>
</dbReference>
<dbReference type="iPTMnet" id="Q8VHF2"/>
<dbReference type="PhosphoSitePlus" id="Q8VHF2"/>
<dbReference type="jPOST" id="Q8VHF2"/>
<dbReference type="PaxDb" id="10090-ENSMUSP00000127292"/>
<dbReference type="ProteomicsDB" id="281282">
    <molecule id="Q8VHF2-1"/>
</dbReference>
<dbReference type="ProteomicsDB" id="281283">
    <molecule id="Q8VHF2-2"/>
</dbReference>
<dbReference type="Antibodypedia" id="2283">
    <property type="antibodies" value="184 antibodies from 27 providers"/>
</dbReference>
<dbReference type="DNASU" id="72040"/>
<dbReference type="Ensembl" id="ENSMUST00000080654.7">
    <molecule id="Q8VHF2-2"/>
    <property type="protein sequence ID" value="ENSMUSP00000079484.6"/>
    <property type="gene ID" value="ENSMUSG00000025497.16"/>
</dbReference>
<dbReference type="GeneID" id="72040"/>
<dbReference type="KEGG" id="mmu:72040"/>
<dbReference type="UCSC" id="uc009kkj.2">
    <molecule id="Q8VHF2-2"/>
    <property type="organism name" value="mouse"/>
</dbReference>
<dbReference type="AGR" id="MGI:1919290"/>
<dbReference type="CTD" id="53841"/>
<dbReference type="MGI" id="MGI:1919290">
    <property type="gene designation" value="Cdhr5"/>
</dbReference>
<dbReference type="VEuPathDB" id="HostDB:ENSMUSG00000025497"/>
<dbReference type="eggNOG" id="KOG3594">
    <property type="taxonomic scope" value="Eukaryota"/>
</dbReference>
<dbReference type="GeneTree" id="ENSGT00940000162463"/>
<dbReference type="HOGENOM" id="CLU_021415_0_0_1"/>
<dbReference type="InParanoid" id="Q8VHF2"/>
<dbReference type="OMA" id="PDYEANT"/>
<dbReference type="OrthoDB" id="8958491at2759"/>
<dbReference type="PhylomeDB" id="Q8VHF2"/>
<dbReference type="BioGRID-ORCS" id="72040">
    <property type="hits" value="1 hit in 77 CRISPR screens"/>
</dbReference>
<dbReference type="ChiTaRS" id="Cdhr5">
    <property type="organism name" value="mouse"/>
</dbReference>
<dbReference type="PRO" id="PR:Q8VHF2"/>
<dbReference type="Proteomes" id="UP000000589">
    <property type="component" value="Chromosome 7"/>
</dbReference>
<dbReference type="RNAct" id="Q8VHF2">
    <property type="molecule type" value="protein"/>
</dbReference>
<dbReference type="Bgee" id="ENSMUSG00000025497">
    <property type="expression patterns" value="Expressed in small intestine Peyer's patch and 55 other cell types or tissues"/>
</dbReference>
<dbReference type="ExpressionAtlas" id="Q8VHF2">
    <property type="expression patterns" value="baseline and differential"/>
</dbReference>
<dbReference type="GO" id="GO:0016324">
    <property type="term" value="C:apical plasma membrane"/>
    <property type="evidence" value="ECO:0000250"/>
    <property type="project" value="UniProtKB"/>
</dbReference>
<dbReference type="GO" id="GO:0031526">
    <property type="term" value="C:brush border membrane"/>
    <property type="evidence" value="ECO:0000250"/>
    <property type="project" value="UniProtKB"/>
</dbReference>
<dbReference type="GO" id="GO:0031528">
    <property type="term" value="C:microvillus membrane"/>
    <property type="evidence" value="ECO:0000250"/>
    <property type="project" value="UniProtKB"/>
</dbReference>
<dbReference type="GO" id="GO:0005886">
    <property type="term" value="C:plasma membrane"/>
    <property type="evidence" value="ECO:0000250"/>
    <property type="project" value="UniProtKB"/>
</dbReference>
<dbReference type="GO" id="GO:0005509">
    <property type="term" value="F:calcium ion binding"/>
    <property type="evidence" value="ECO:0000250"/>
    <property type="project" value="UniProtKB"/>
</dbReference>
<dbReference type="GO" id="GO:0050839">
    <property type="term" value="F:cell adhesion molecule binding"/>
    <property type="evidence" value="ECO:0000250"/>
    <property type="project" value="UniProtKB"/>
</dbReference>
<dbReference type="GO" id="GO:0007155">
    <property type="term" value="P:cell adhesion"/>
    <property type="evidence" value="ECO:0000250"/>
    <property type="project" value="UniProtKB"/>
</dbReference>
<dbReference type="GO" id="GO:0030154">
    <property type="term" value="P:cell differentiation"/>
    <property type="evidence" value="ECO:0007669"/>
    <property type="project" value="UniProtKB-KW"/>
</dbReference>
<dbReference type="GO" id="GO:0007156">
    <property type="term" value="P:homophilic cell adhesion via plasma membrane adhesion molecules"/>
    <property type="evidence" value="ECO:0007669"/>
    <property type="project" value="InterPro"/>
</dbReference>
<dbReference type="GO" id="GO:0090675">
    <property type="term" value="P:intermicrovillar adhesion"/>
    <property type="evidence" value="ECO:0000250"/>
    <property type="project" value="UniProtKB"/>
</dbReference>
<dbReference type="GO" id="GO:0032532">
    <property type="term" value="P:regulation of microvillus length"/>
    <property type="evidence" value="ECO:0000250"/>
    <property type="project" value="UniProtKB"/>
</dbReference>
<dbReference type="CDD" id="cd11304">
    <property type="entry name" value="Cadherin_repeat"/>
    <property type="match status" value="3"/>
</dbReference>
<dbReference type="FunFam" id="2.60.40.60:FF:000261">
    <property type="entry name" value="Cadherin-related family member 5"/>
    <property type="match status" value="1"/>
</dbReference>
<dbReference type="Gene3D" id="2.60.40.60">
    <property type="entry name" value="Cadherins"/>
    <property type="match status" value="2"/>
</dbReference>
<dbReference type="InterPro" id="IPR039808">
    <property type="entry name" value="Cadherin"/>
</dbReference>
<dbReference type="InterPro" id="IPR002126">
    <property type="entry name" value="Cadherin-like_dom"/>
</dbReference>
<dbReference type="InterPro" id="IPR015919">
    <property type="entry name" value="Cadherin-like_sf"/>
</dbReference>
<dbReference type="InterPro" id="IPR020894">
    <property type="entry name" value="Cadherin_CS"/>
</dbReference>
<dbReference type="PANTHER" id="PTHR24027">
    <property type="entry name" value="CADHERIN-23"/>
    <property type="match status" value="1"/>
</dbReference>
<dbReference type="PANTHER" id="PTHR24027:SF414">
    <property type="entry name" value="CADHERIN-RELATED FAMILY MEMBER 5 ISOFORM X1"/>
    <property type="match status" value="1"/>
</dbReference>
<dbReference type="SMART" id="SM00112">
    <property type="entry name" value="CA"/>
    <property type="match status" value="2"/>
</dbReference>
<dbReference type="SUPFAM" id="SSF49313">
    <property type="entry name" value="Cadherin-like"/>
    <property type="match status" value="2"/>
</dbReference>
<dbReference type="PROSITE" id="PS00232">
    <property type="entry name" value="CADHERIN_1"/>
    <property type="match status" value="1"/>
</dbReference>
<dbReference type="PROSITE" id="PS50268">
    <property type="entry name" value="CADHERIN_2"/>
    <property type="match status" value="2"/>
</dbReference>
<organism evidence="11">
    <name type="scientific">Mus musculus</name>
    <name type="common">Mouse</name>
    <dbReference type="NCBI Taxonomy" id="10090"/>
    <lineage>
        <taxon>Eukaryota</taxon>
        <taxon>Metazoa</taxon>
        <taxon>Chordata</taxon>
        <taxon>Craniata</taxon>
        <taxon>Vertebrata</taxon>
        <taxon>Euteleostomi</taxon>
        <taxon>Mammalia</taxon>
        <taxon>Eutheria</taxon>
        <taxon>Euarchontoglires</taxon>
        <taxon>Glires</taxon>
        <taxon>Rodentia</taxon>
        <taxon>Myomorpha</taxon>
        <taxon>Muroidea</taxon>
        <taxon>Muridae</taxon>
        <taxon>Murinae</taxon>
        <taxon>Mus</taxon>
        <taxon>Mus</taxon>
    </lineage>
</organism>